<sequence length="427" mass="47047">MRKCKIFVGNSHPELGNMVCQRLGIEPAPCTLKKFANGETSVQIGVSVRDEDVYVIQSGSPSINDDIMELLILVSACRGGSARKITAVIPQFPYSKQCKMKRHRGAITARMLANLLVMAGADHVVSMDLHASQMQGFFTKPVDNLYGGPSLAKWIRENVEDYEDAVVVSKNPGGTKRVTALADSLKINFAMIHTDRRRSKDLYSQNKDLQQLKLRKQSMLRKNRPIIRQGDHPNEEENIILSNGIQTARIRNGHVIGDDEADDDEDAILESDSELHSIDGLDSHGLGGTYDAVDSEDEEEIPVLYREQLITLVGNVRGRSAIILDDMIDRPGSFISAAEHLVQNCGAKKVYVVATHGIFTGDCLEELEKSDAIDTIVVTNTYPISGERIAGSKKLVTIDVSPIFAECIRRDHYGESISVLFDSLAAL</sequence>
<organism>
    <name type="scientific">Saccharomyces cerevisiae (strain ATCC 204508 / S288c)</name>
    <name type="common">Baker's yeast</name>
    <dbReference type="NCBI Taxonomy" id="559292"/>
    <lineage>
        <taxon>Eukaryota</taxon>
        <taxon>Fungi</taxon>
        <taxon>Dikarya</taxon>
        <taxon>Ascomycota</taxon>
        <taxon>Saccharomycotina</taxon>
        <taxon>Saccharomycetes</taxon>
        <taxon>Saccharomycetales</taxon>
        <taxon>Saccharomycetaceae</taxon>
        <taxon>Saccharomyces</taxon>
    </lineage>
</organism>
<evidence type="ECO:0000255" key="1"/>
<evidence type="ECO:0000269" key="2">
    <source>
    </source>
</evidence>
<evidence type="ECO:0000269" key="3">
    <source>
    </source>
</evidence>
<evidence type="ECO:0000269" key="4">
    <source>
    </source>
</evidence>
<evidence type="ECO:0000269" key="5">
    <source>
    </source>
</evidence>
<evidence type="ECO:0000269" key="6">
    <source>
    </source>
</evidence>
<evidence type="ECO:0000305" key="7"/>
<evidence type="ECO:0007744" key="8">
    <source>
    </source>
</evidence>
<evidence type="ECO:0007744" key="9">
    <source>
    </source>
</evidence>
<keyword id="KW-0067">ATP-binding</keyword>
<keyword id="KW-0963">Cytoplasm</keyword>
<keyword id="KW-0418">Kinase</keyword>
<keyword id="KW-0460">Magnesium</keyword>
<keyword id="KW-0479">Metal-binding</keyword>
<keyword id="KW-0545">Nucleotide biosynthesis</keyword>
<keyword id="KW-0547">Nucleotide-binding</keyword>
<keyword id="KW-0597">Phosphoprotein</keyword>
<keyword id="KW-1185">Reference proteome</keyword>
<keyword id="KW-0808">Transferase</keyword>
<reference key="1">
    <citation type="journal article" date="1994" name="Mol. Cell. Biol.">
        <title>The Saccharomyces cerevisiae mutation elm4-1 facilitates pseudohyphal differentiation and interacts with a deficiency in phosphoribosylpyrophosphate synthase activity to cause constitutive pseudohyphal growth.</title>
        <authorList>
            <person name="Blacketer M.J."/>
            <person name="Madaule P."/>
            <person name="Myers A.M."/>
        </authorList>
    </citation>
    <scope>NUCLEOTIDE SEQUENCE [GENOMIC DNA]</scope>
</reference>
<reference key="2">
    <citation type="journal article" date="1994" name="Yeast">
        <title>Phosphoribosylpyrophosphate synthetase (PRS): a new gene family in Saccharomyces cerevisiae.</title>
        <authorList>
            <person name="Carter A.T."/>
            <person name="Narbad A."/>
            <person name="Pearson B.M."/>
            <person name="Beck K.-F."/>
            <person name="Logghe M."/>
            <person name="Contreras R."/>
            <person name="Schweizer M."/>
        </authorList>
    </citation>
    <scope>NUCLEOTIDE SEQUENCE [GENOMIC DNA]</scope>
    <source>
        <strain>ATCC 26786 / X2180-1A</strain>
    </source>
</reference>
<reference key="3">
    <citation type="journal article" date="1995" name="Yeast">
        <authorList>
            <person name="Carter A.T."/>
            <person name="Narbad A."/>
            <person name="Pearson B.M."/>
            <person name="Beck K.-F."/>
            <person name="Logghe M."/>
            <person name="Contreras R."/>
            <person name="Schweizer M."/>
        </authorList>
    </citation>
    <scope>ERRATUM OF PUBMED:7992503</scope>
</reference>
<reference key="4">
    <citation type="journal article" date="1993" name="Yeast">
        <title>Sequencing and analysis of 51.6 kilobases on the left arm of chromosome XI from Saccharomyces cerevisiae reveals 23 open reading frames including the FAS1 gene.</title>
        <authorList>
            <person name="Wiemann S."/>
            <person name="Voss H."/>
            <person name="Schwager C."/>
            <person name="Rupp T."/>
            <person name="Stegemann J."/>
            <person name="Zimmermann J."/>
            <person name="Grothues D."/>
            <person name="Sensen C."/>
            <person name="Erfle H."/>
            <person name="Hewitt N."/>
            <person name="Banrevi A."/>
            <person name="Ansorge W."/>
        </authorList>
    </citation>
    <scope>NUCLEOTIDE SEQUENCE [GENOMIC DNA]</scope>
</reference>
<reference key="5">
    <citation type="journal article" date="1994" name="Nature">
        <title>Complete DNA sequence of yeast chromosome XI.</title>
        <authorList>
            <person name="Dujon B."/>
            <person name="Alexandraki D."/>
            <person name="Andre B."/>
            <person name="Ansorge W."/>
            <person name="Baladron V."/>
            <person name="Ballesta J.P.G."/>
            <person name="Banrevi A."/>
            <person name="Bolle P.-A."/>
            <person name="Bolotin-Fukuhara M."/>
            <person name="Bossier P."/>
            <person name="Bou G."/>
            <person name="Boyer J."/>
            <person name="Buitrago M.J."/>
            <person name="Cheret G."/>
            <person name="Colleaux L."/>
            <person name="Daignan-Fornier B."/>
            <person name="del Rey F."/>
            <person name="Dion C."/>
            <person name="Domdey H."/>
            <person name="Duesterhoeft A."/>
            <person name="Duesterhus S."/>
            <person name="Entian K.-D."/>
            <person name="Erfle H."/>
            <person name="Esteban P.F."/>
            <person name="Feldmann H."/>
            <person name="Fernandes L."/>
            <person name="Fobo G.M."/>
            <person name="Fritz C."/>
            <person name="Fukuhara H."/>
            <person name="Gabel C."/>
            <person name="Gaillon L."/>
            <person name="Garcia-Cantalejo J.M."/>
            <person name="Garcia-Ramirez J.J."/>
            <person name="Gent M.E."/>
            <person name="Ghazvini M."/>
            <person name="Goffeau A."/>
            <person name="Gonzalez A."/>
            <person name="Grothues D."/>
            <person name="Guerreiro P."/>
            <person name="Hegemann J.H."/>
            <person name="Hewitt N."/>
            <person name="Hilger F."/>
            <person name="Hollenberg C.P."/>
            <person name="Horaitis O."/>
            <person name="Indge K.J."/>
            <person name="Jacquier A."/>
            <person name="James C.M."/>
            <person name="Jauniaux J.-C."/>
            <person name="Jimenez A."/>
            <person name="Keuchel H."/>
            <person name="Kirchrath L."/>
            <person name="Kleine K."/>
            <person name="Koetter P."/>
            <person name="Legrain P."/>
            <person name="Liebl S."/>
            <person name="Louis E.J."/>
            <person name="Maia e Silva A."/>
            <person name="Marck C."/>
            <person name="Monnier A.-L."/>
            <person name="Moestl D."/>
            <person name="Mueller S."/>
            <person name="Obermaier B."/>
            <person name="Oliver S.G."/>
            <person name="Pallier C."/>
            <person name="Pascolo S."/>
            <person name="Pfeiffer F."/>
            <person name="Philippsen P."/>
            <person name="Planta R.J."/>
            <person name="Pohl F.M."/>
            <person name="Pohl T.M."/>
            <person name="Poehlmann R."/>
            <person name="Portetelle D."/>
            <person name="Purnelle B."/>
            <person name="Puzos V."/>
            <person name="Ramezani Rad M."/>
            <person name="Rasmussen S.W."/>
            <person name="Remacha M.A."/>
            <person name="Revuelta J.L."/>
            <person name="Richard G.-F."/>
            <person name="Rieger M."/>
            <person name="Rodrigues-Pousada C."/>
            <person name="Rose M."/>
            <person name="Rupp T."/>
            <person name="Santos M.A."/>
            <person name="Schwager C."/>
            <person name="Sensen C."/>
            <person name="Skala J."/>
            <person name="Soares H."/>
            <person name="Sor F."/>
            <person name="Stegemann J."/>
            <person name="Tettelin H."/>
            <person name="Thierry A."/>
            <person name="Tzermia M."/>
            <person name="Urrestarazu L.A."/>
            <person name="van Dyck L."/>
            <person name="van Vliet-Reedijk J.C."/>
            <person name="Valens M."/>
            <person name="Vandenbol M."/>
            <person name="Vilela C."/>
            <person name="Vissers S."/>
            <person name="von Wettstein D."/>
            <person name="Voss H."/>
            <person name="Wiemann S."/>
            <person name="Xu G."/>
            <person name="Zimmermann J."/>
            <person name="Haasemann M."/>
            <person name="Becker I."/>
            <person name="Mewes H.-W."/>
        </authorList>
    </citation>
    <scope>NUCLEOTIDE SEQUENCE [LARGE SCALE GENOMIC DNA]</scope>
    <source>
        <strain>ATCC 204508 / S288c</strain>
    </source>
</reference>
<reference key="6">
    <citation type="journal article" date="2014" name="G3 (Bethesda)">
        <title>The reference genome sequence of Saccharomyces cerevisiae: Then and now.</title>
        <authorList>
            <person name="Engel S.R."/>
            <person name="Dietrich F.S."/>
            <person name="Fisk D.G."/>
            <person name="Binkley G."/>
            <person name="Balakrishnan R."/>
            <person name="Costanzo M.C."/>
            <person name="Dwight S.S."/>
            <person name="Hitz B.C."/>
            <person name="Karra K."/>
            <person name="Nash R.S."/>
            <person name="Weng S."/>
            <person name="Wong E.D."/>
            <person name="Lloyd P."/>
            <person name="Skrzypek M.S."/>
            <person name="Miyasato S.R."/>
            <person name="Simison M."/>
            <person name="Cherry J.M."/>
        </authorList>
    </citation>
    <scope>GENOME REANNOTATION</scope>
    <source>
        <strain>ATCC 204508 / S288c</strain>
    </source>
</reference>
<reference key="7">
    <citation type="journal article" date="1997" name="Mol. Gen. Genet.">
        <title>PRS1 is a key member of the gene family encoding phosphoribosylpyrophosphate synthetase in Saccharomyces cerevisiae.</title>
        <authorList>
            <person name="Carter A.T."/>
            <person name="Beiche F."/>
            <person name="Hove-Jensen B."/>
            <person name="Narbad A."/>
            <person name="Barker P.J."/>
            <person name="Schweizer L.M."/>
            <person name="Schweizer M."/>
        </authorList>
    </citation>
    <scope>ENZYME ACTIVITY</scope>
</reference>
<reference key="8">
    <citation type="journal article" date="1999" name="J. Biol. Chem.">
        <title>Genetic analysis and enzyme activity suggest the existence of more than one minimal functional unit capable of synthesizing phosphoribosyl pyrophosphate in Saccharomyces cerevisiae.</title>
        <authorList>
            <person name="Hernando Y."/>
            <person name="Carter A.T."/>
            <person name="Parr A."/>
            <person name="Hove-Jensen B."/>
            <person name="Schweizer M."/>
        </authorList>
    </citation>
    <scope>FUNCTION</scope>
    <scope>ENZYME ACTIVITY</scope>
</reference>
<reference key="9">
    <citation type="journal article" date="2003" name="Nature">
        <title>Global analysis of protein localization in budding yeast.</title>
        <authorList>
            <person name="Huh W.-K."/>
            <person name="Falvo J.V."/>
            <person name="Gerke L.C."/>
            <person name="Carroll A.S."/>
            <person name="Howson R.W."/>
            <person name="Weissman J.S."/>
            <person name="O'Shea E.K."/>
        </authorList>
    </citation>
    <scope>SUBCELLULAR LOCATION [LARGE SCALE ANALYSIS]</scope>
</reference>
<reference key="10">
    <citation type="journal article" date="2003" name="Nature">
        <title>Global analysis of protein expression in yeast.</title>
        <authorList>
            <person name="Ghaemmaghami S."/>
            <person name="Huh W.-K."/>
            <person name="Bower K."/>
            <person name="Howson R.W."/>
            <person name="Belle A."/>
            <person name="Dephoure N."/>
            <person name="O'Shea E.K."/>
            <person name="Weissman J.S."/>
        </authorList>
    </citation>
    <scope>LEVEL OF PROTEIN EXPRESSION [LARGE SCALE ANALYSIS]</scope>
</reference>
<reference key="11">
    <citation type="journal article" date="2004" name="J. Biol. Chem.">
        <title>Heterooligomeric phosphoribosyl diphosphate synthase of Saccharomyces cerevisiae: combinatorial expression of the five PRS genes in Escherichia coli.</title>
        <authorList>
            <person name="Hove-Jensen B."/>
        </authorList>
    </citation>
    <scope>FUNCTION</scope>
    <scope>ENZYME ACTIVITY</scope>
</reference>
<reference key="12">
    <citation type="journal article" date="2007" name="Proc. Natl. Acad. Sci. U.S.A.">
        <title>Analysis of phosphorylation sites on proteins from Saccharomyces cerevisiae by electron transfer dissociation (ETD) mass spectrometry.</title>
        <authorList>
            <person name="Chi A."/>
            <person name="Huttenhower C."/>
            <person name="Geer L.Y."/>
            <person name="Coon J.J."/>
            <person name="Syka J.E.P."/>
            <person name="Bai D.L."/>
            <person name="Shabanowitz J."/>
            <person name="Burke D.J."/>
            <person name="Troyanskaya O.G."/>
            <person name="Hunt D.F."/>
        </authorList>
    </citation>
    <scope>PHOSPHORYLATION [LARGE SCALE ANALYSIS] AT SER-199 AND SER-218</scope>
    <scope>IDENTIFICATION BY MASS SPECTROMETRY [LARGE SCALE ANALYSIS]</scope>
</reference>
<reference key="13">
    <citation type="journal article" date="2008" name="Mol. Cell. Proteomics">
        <title>A multidimensional chromatography technology for in-depth phosphoproteome analysis.</title>
        <authorList>
            <person name="Albuquerque C.P."/>
            <person name="Smolka M.B."/>
            <person name="Payne S.H."/>
            <person name="Bafna V."/>
            <person name="Eng J."/>
            <person name="Zhou H."/>
        </authorList>
    </citation>
    <scope>PHOSPHORYLATION [LARGE SCALE ANALYSIS] AT SER-199; SER-271 AND SER-295</scope>
    <scope>IDENTIFICATION BY MASS SPECTROMETRY [LARGE SCALE ANALYSIS]</scope>
</reference>
<accession>P32895</accession>
<accession>D6VX20</accession>
<gene>
    <name type="primary">PRS1</name>
    <name type="synonym">PPS1</name>
    <name type="synonym">PRP1</name>
    <name type="synonym">PRPS</name>
    <name type="synonym">PRPS1</name>
    <name type="ordered locus">YKL181W</name>
</gene>
<dbReference type="EC" id="2.7.6.1"/>
<dbReference type="EMBL" id="L04130">
    <property type="protein sequence ID" value="AAA21811.1"/>
    <property type="molecule type" value="Genomic_DNA"/>
</dbReference>
<dbReference type="EMBL" id="X70069">
    <property type="protein sequence ID" value="CAA49674.1"/>
    <property type="molecule type" value="Genomic_DNA"/>
</dbReference>
<dbReference type="EMBL" id="X74151">
    <property type="protein sequence ID" value="CAA52257.1"/>
    <property type="molecule type" value="Genomic_DNA"/>
</dbReference>
<dbReference type="EMBL" id="Z28181">
    <property type="protein sequence ID" value="CAA82024.1"/>
    <property type="molecule type" value="Genomic_DNA"/>
</dbReference>
<dbReference type="EMBL" id="BK006944">
    <property type="protein sequence ID" value="DAA08986.1"/>
    <property type="molecule type" value="Genomic_DNA"/>
</dbReference>
<dbReference type="PIR" id="S30558">
    <property type="entry name" value="S30558"/>
</dbReference>
<dbReference type="RefSeq" id="NP_012740.1">
    <property type="nucleotide sequence ID" value="NM_001179747.1"/>
</dbReference>
<dbReference type="SMR" id="P32895"/>
<dbReference type="BioGRID" id="33941">
    <property type="interactions" value="76"/>
</dbReference>
<dbReference type="DIP" id="DIP-4857N"/>
<dbReference type="FunCoup" id="P32895">
    <property type="interactions" value="497"/>
</dbReference>
<dbReference type="IntAct" id="P32895">
    <property type="interactions" value="23"/>
</dbReference>
<dbReference type="MINT" id="P32895"/>
<dbReference type="STRING" id="4932.YKL181W"/>
<dbReference type="iPTMnet" id="P32895"/>
<dbReference type="PaxDb" id="4932-YKL181W"/>
<dbReference type="PeptideAtlas" id="P32895"/>
<dbReference type="EnsemblFungi" id="YKL181W_mRNA">
    <property type="protein sequence ID" value="YKL181W"/>
    <property type="gene ID" value="YKL181W"/>
</dbReference>
<dbReference type="GeneID" id="853654"/>
<dbReference type="KEGG" id="sce:YKL181W"/>
<dbReference type="AGR" id="SGD:S000001664"/>
<dbReference type="SGD" id="S000001664">
    <property type="gene designation" value="PRS1"/>
</dbReference>
<dbReference type="VEuPathDB" id="FungiDB:YKL181W"/>
<dbReference type="eggNOG" id="KOG1448">
    <property type="taxonomic scope" value="Eukaryota"/>
</dbReference>
<dbReference type="GeneTree" id="ENSGT00950000182803"/>
<dbReference type="HOGENOM" id="CLU_033546_1_2_1"/>
<dbReference type="InParanoid" id="P32895"/>
<dbReference type="OMA" id="CKMKKHR"/>
<dbReference type="OrthoDB" id="413572at2759"/>
<dbReference type="BioCyc" id="YEAST:YKL181W-MONOMER"/>
<dbReference type="Reactome" id="R-SCE-73843">
    <property type="pathway name" value="5-Phosphoribose 1-diphosphate biosynthesis"/>
</dbReference>
<dbReference type="UniPathway" id="UPA00087">
    <property type="reaction ID" value="UER00172"/>
</dbReference>
<dbReference type="BioGRID-ORCS" id="853654">
    <property type="hits" value="2 hits in 10 CRISPR screens"/>
</dbReference>
<dbReference type="CD-CODE" id="E03F929F">
    <property type="entry name" value="Stress granule"/>
</dbReference>
<dbReference type="PRO" id="PR:P32895"/>
<dbReference type="Proteomes" id="UP000002311">
    <property type="component" value="Chromosome XI"/>
</dbReference>
<dbReference type="RNAct" id="P32895">
    <property type="molecule type" value="protein"/>
</dbReference>
<dbReference type="GO" id="GO:0005737">
    <property type="term" value="C:cytoplasm"/>
    <property type="evidence" value="ECO:0000314"/>
    <property type="project" value="SGD"/>
</dbReference>
<dbReference type="GO" id="GO:0010494">
    <property type="term" value="C:cytoplasmic stress granule"/>
    <property type="evidence" value="ECO:0007005"/>
    <property type="project" value="SGD"/>
</dbReference>
<dbReference type="GO" id="GO:0002189">
    <property type="term" value="C:ribose phosphate diphosphokinase complex"/>
    <property type="evidence" value="ECO:0000314"/>
    <property type="project" value="SGD"/>
</dbReference>
<dbReference type="GO" id="GO:0005524">
    <property type="term" value="F:ATP binding"/>
    <property type="evidence" value="ECO:0007669"/>
    <property type="project" value="UniProtKB-KW"/>
</dbReference>
<dbReference type="GO" id="GO:0016301">
    <property type="term" value="F:kinase activity"/>
    <property type="evidence" value="ECO:0007669"/>
    <property type="project" value="UniProtKB-KW"/>
</dbReference>
<dbReference type="GO" id="GO:0000287">
    <property type="term" value="F:magnesium ion binding"/>
    <property type="evidence" value="ECO:0007669"/>
    <property type="project" value="InterPro"/>
</dbReference>
<dbReference type="GO" id="GO:0004749">
    <property type="term" value="F:ribose phosphate diphosphokinase activity"/>
    <property type="evidence" value="ECO:0007669"/>
    <property type="project" value="UniProtKB-EC"/>
</dbReference>
<dbReference type="GO" id="GO:0006015">
    <property type="term" value="P:5-phosphoribose 1-diphosphate biosynthetic process"/>
    <property type="evidence" value="ECO:0000315"/>
    <property type="project" value="SGD"/>
</dbReference>
<dbReference type="GO" id="GO:0006164">
    <property type="term" value="P:purine nucleotide biosynthetic process"/>
    <property type="evidence" value="ECO:0000318"/>
    <property type="project" value="GO_Central"/>
</dbReference>
<dbReference type="GO" id="GO:0009156">
    <property type="term" value="P:ribonucleoside monophosphate biosynthetic process"/>
    <property type="evidence" value="ECO:0007669"/>
    <property type="project" value="InterPro"/>
</dbReference>
<dbReference type="CDD" id="cd06223">
    <property type="entry name" value="PRTases_typeI"/>
    <property type="match status" value="1"/>
</dbReference>
<dbReference type="FunFam" id="3.40.50.2020:FF:000017">
    <property type="entry name" value="Ribose-phosphate pyrophosphokinase 1"/>
    <property type="match status" value="1"/>
</dbReference>
<dbReference type="FunFam" id="3.40.50.2020:FF:000043">
    <property type="entry name" value="Ribose-phosphate pyrophosphokinase 1"/>
    <property type="match status" value="1"/>
</dbReference>
<dbReference type="FunFam" id="3.40.50.2020:FF:000051">
    <property type="entry name" value="Ribose-phosphate pyrophosphokinase 1"/>
    <property type="match status" value="1"/>
</dbReference>
<dbReference type="Gene3D" id="3.40.50.2020">
    <property type="match status" value="4"/>
</dbReference>
<dbReference type="InterPro" id="IPR000842">
    <property type="entry name" value="PRib_PP_synth_CS"/>
</dbReference>
<dbReference type="InterPro" id="IPR029099">
    <property type="entry name" value="Pribosyltran_N"/>
</dbReference>
<dbReference type="InterPro" id="IPR000836">
    <property type="entry name" value="PRibTrfase_dom"/>
</dbReference>
<dbReference type="InterPro" id="IPR029057">
    <property type="entry name" value="PRTase-like"/>
</dbReference>
<dbReference type="InterPro" id="IPR005946">
    <property type="entry name" value="Rib-P_diPkinase"/>
</dbReference>
<dbReference type="NCBIfam" id="TIGR01251">
    <property type="entry name" value="ribP_PPkin"/>
    <property type="match status" value="1"/>
</dbReference>
<dbReference type="PANTHER" id="PTHR10210:SF57">
    <property type="entry name" value="RIBOSE-PHOSPHATE DIPHOSPHOKINASE"/>
    <property type="match status" value="1"/>
</dbReference>
<dbReference type="PANTHER" id="PTHR10210">
    <property type="entry name" value="RIBOSE-PHOSPHATE DIPHOSPHOKINASE FAMILY MEMBER"/>
    <property type="match status" value="1"/>
</dbReference>
<dbReference type="Pfam" id="PF14572">
    <property type="entry name" value="Pribosyl_synth"/>
    <property type="match status" value="1"/>
</dbReference>
<dbReference type="Pfam" id="PF13793">
    <property type="entry name" value="Pribosyltran_N"/>
    <property type="match status" value="1"/>
</dbReference>
<dbReference type="SMART" id="SM01400">
    <property type="entry name" value="Pribosyltran_N"/>
    <property type="match status" value="1"/>
</dbReference>
<dbReference type="SUPFAM" id="SSF53271">
    <property type="entry name" value="PRTase-like"/>
    <property type="match status" value="2"/>
</dbReference>
<dbReference type="PROSITE" id="PS00114">
    <property type="entry name" value="PRPP_SYNTHASE"/>
    <property type="match status" value="1"/>
</dbReference>
<name>KPR1_YEAST</name>
<feature type="chain" id="PRO_0000141086" description="Ribose-phosphate pyrophosphokinase 1">
    <location>
        <begin position="1"/>
        <end position="427"/>
    </location>
</feature>
<feature type="binding site" evidence="1">
    <location>
        <position position="128"/>
    </location>
    <ligand>
        <name>Mg(2+)</name>
        <dbReference type="ChEBI" id="CHEBI:18420"/>
    </ligand>
</feature>
<feature type="binding site" evidence="1">
    <location>
        <position position="130"/>
    </location>
    <ligand>
        <name>Mg(2+)</name>
        <dbReference type="ChEBI" id="CHEBI:18420"/>
    </ligand>
</feature>
<feature type="binding site" evidence="1">
    <location>
        <position position="143"/>
    </location>
    <ligand>
        <name>Mg(2+)</name>
        <dbReference type="ChEBI" id="CHEBI:18420"/>
    </ligand>
</feature>
<feature type="modified residue" description="Phosphoserine" evidence="8 9">
    <location>
        <position position="199"/>
    </location>
</feature>
<feature type="modified residue" description="Phosphoserine" evidence="8">
    <location>
        <position position="218"/>
    </location>
</feature>
<feature type="modified residue" description="Phosphoserine" evidence="9">
    <location>
        <position position="271"/>
    </location>
</feature>
<feature type="modified residue" description="Phosphoserine" evidence="9">
    <location>
        <position position="295"/>
    </location>
</feature>
<comment type="function">
    <text evidence="2 5">5-phosphoribose 1-diphosphate synthase involved in nucleotide, histidine, and tryptophan biosynthesis. Active in heteromultimeric complexes with other 5-phosphoribose 1-diphosphate synthases (PRS2, PRS3, PRS4 and PRS5).</text>
</comment>
<comment type="catalytic activity">
    <reaction evidence="2 5 6">
        <text>D-ribose 5-phosphate + ATP = 5-phospho-alpha-D-ribose 1-diphosphate + AMP + H(+)</text>
        <dbReference type="Rhea" id="RHEA:15609"/>
        <dbReference type="ChEBI" id="CHEBI:15378"/>
        <dbReference type="ChEBI" id="CHEBI:30616"/>
        <dbReference type="ChEBI" id="CHEBI:58017"/>
        <dbReference type="ChEBI" id="CHEBI:78346"/>
        <dbReference type="ChEBI" id="CHEBI:456215"/>
        <dbReference type="EC" id="2.7.6.1"/>
    </reaction>
</comment>
<comment type="pathway">
    <text>Metabolic intermediate biosynthesis; 5-phospho-alpha-D-ribose 1-diphosphate biosynthesis; 5-phospho-alpha-D-ribose 1-diphosphate from D-ribose 5-phosphate (route I): step 1/1.</text>
</comment>
<comment type="interaction">
    <interactant intactId="EBI-9869">
        <id>P32895</id>
    </interactant>
    <interactant intactId="EBI-9877">
        <id>P38689</id>
        <label>PRS3</label>
    </interactant>
    <organismsDiffer>false</organismsDiffer>
    <experiments>6</experiments>
</comment>
<comment type="interaction">
    <interactant intactId="EBI-9869">
        <id>P32895</id>
    </interactant>
    <interactant intactId="EBI-9882">
        <id>P38063</id>
        <label>PRS4</label>
    </interactant>
    <organismsDiffer>false</organismsDiffer>
    <experiments>4</experiments>
</comment>
<comment type="interaction">
    <interactant intactId="EBI-9869">
        <id>P32895</id>
    </interactant>
    <interactant intactId="EBI-9886">
        <id>Q12265</id>
        <label>PRS5</label>
    </interactant>
    <organismsDiffer>false</organismsDiffer>
    <experiments>3</experiments>
</comment>
<comment type="subcellular location">
    <subcellularLocation>
        <location evidence="3">Cytoplasm</location>
    </subcellularLocation>
</comment>
<comment type="miscellaneous">
    <text evidence="4">Present with 11700 molecules/cell in log phase SD medium.</text>
</comment>
<comment type="similarity">
    <text evidence="7">Belongs to the ribose-phosphate pyrophosphokinase family.</text>
</comment>
<protein>
    <recommendedName>
        <fullName>Ribose-phosphate pyrophosphokinase 1</fullName>
        <ecNumber>2.7.6.1</ecNumber>
    </recommendedName>
    <alternativeName>
        <fullName>Phosphoribosyl pyrophosphate synthase 1</fullName>
    </alternativeName>
</protein>
<proteinExistence type="evidence at protein level"/>